<keyword id="KW-0235">DNA replication</keyword>
<keyword id="KW-1185">Reference proteome</keyword>
<comment type="function">
    <text evidence="1">Essential for L-replicon function. Necessary for initiation of DNA replication from the L-replicon at oriL (Probable).</text>
</comment>
<comment type="sequence caution" evidence="1">
    <conflict type="erroneous initiation">
        <sequence resource="EMBL-CDS" id="CAA33657"/>
    </conflict>
</comment>
<sequence>MLAKVTFLSCITMSDFTFSGYELACFVTHSGLSRSAGHILSQCANLAATTSEYFIHKPHRLIAAETGYSQSTVVRAFREAVNKGILSVEIVIGDHRERRANLYRFTPSFLAFAQQAKNALIESKLKISSAATKVKAVLAKTLALFNFLSTPPCQNDTPSPCQDDVAIKNKKSQVKKTKRSVSGGAGTTSLKKLTSWIAKAKAKADNLRLSKKRTQKHEFKQKVEAAARKYAYLKNKRSPDIGGISNFDNLPHCMTVNEALNAVLAKNKDNEQWGIPAGFRG</sequence>
<reference key="1">
    <citation type="journal article" date="1989" name="J. Mol. Biol.">
        <title>Structure and regulation of the lytic replicon of phage P1.</title>
        <authorList>
            <person name="Hansen E.B."/>
        </authorList>
    </citation>
    <scope>NUCLEOTIDE SEQUENCE [GENOMIC DNA]</scope>
</reference>
<reference key="2">
    <citation type="journal article" date="1989" name="J. Mol. Biol.">
        <title>Genetic analysis of the lytic replicon of bacteriophage P1. II. Organization of replicon elements.</title>
        <authorList>
            <person name="Sternberg N."/>
            <person name="Cohen G."/>
        </authorList>
    </citation>
    <scope>NUCLEOTIDE SEQUENCE [GENOMIC DNA]</scope>
</reference>
<reference key="3">
    <citation type="journal article" date="2004" name="J. Bacteriol.">
        <title>Genome of bacteriophage P1.</title>
        <authorList>
            <person name="Lobocka M.B."/>
            <person name="Rose D.J."/>
            <person name="Plunkett G. III"/>
            <person name="Rusin M."/>
            <person name="Samojedny A."/>
            <person name="Lehnherr H."/>
            <person name="Yarmolinsky M.B."/>
            <person name="Blattner F.R."/>
        </authorList>
    </citation>
    <scope>NUCLEOTIDE SEQUENCE [LARGE SCALE GENOMIC DNA]</scope>
</reference>
<name>REPL_BPP1</name>
<gene>
    <name type="primary">repL</name>
</gene>
<accession>P19654</accession>
<feature type="chain" id="PRO_0000165281" description="Replication protein repL">
    <location>
        <begin position="1"/>
        <end position="281"/>
    </location>
</feature>
<organismHost>
    <name type="scientific">Enterobacteriaceae</name>
    <dbReference type="NCBI Taxonomy" id="543"/>
</organismHost>
<dbReference type="EMBL" id="X15639">
    <property type="protein sequence ID" value="CAA33662.1"/>
    <property type="molecule type" value="Genomic_DNA"/>
</dbReference>
<dbReference type="EMBL" id="X15638">
    <property type="protein sequence ID" value="CAA33656.1"/>
    <property type="molecule type" value="Genomic_DNA"/>
</dbReference>
<dbReference type="EMBL" id="X15638">
    <property type="protein sequence ID" value="CAA33657.1"/>
    <property type="status" value="ALT_INIT"/>
    <property type="molecule type" value="Genomic_DNA"/>
</dbReference>
<dbReference type="EMBL" id="AF234172">
    <property type="protein sequence ID" value="AAQ14022.1"/>
    <property type="molecule type" value="Genomic_DNA"/>
</dbReference>
<dbReference type="PIR" id="S04263">
    <property type="entry name" value="RLBPP1"/>
</dbReference>
<dbReference type="RefSeq" id="YP_006518.1">
    <property type="nucleotide sequence ID" value="NC_005856.1"/>
</dbReference>
<dbReference type="SMR" id="P19654"/>
<dbReference type="GeneID" id="2777395"/>
<dbReference type="KEGG" id="vg:2777395"/>
<dbReference type="Proteomes" id="UP000008091">
    <property type="component" value="Genome"/>
</dbReference>
<dbReference type="GO" id="GO:0006260">
    <property type="term" value="P:DNA replication"/>
    <property type="evidence" value="ECO:0007669"/>
    <property type="project" value="UniProtKB-KW"/>
</dbReference>
<evidence type="ECO:0000305" key="1"/>
<organism>
    <name type="scientific">Escherichia phage P1</name>
    <name type="common">Bacteriophage P1</name>
    <dbReference type="NCBI Taxonomy" id="2886926"/>
    <lineage>
        <taxon>Viruses</taxon>
        <taxon>Duplodnaviria</taxon>
        <taxon>Heunggongvirae</taxon>
        <taxon>Uroviricota</taxon>
        <taxon>Caudoviricetes</taxon>
        <taxon>Punavirus</taxon>
        <taxon>Punavirus P1</taxon>
    </lineage>
</organism>
<proteinExistence type="predicted"/>
<protein>
    <recommendedName>
        <fullName>Replication protein repL</fullName>
    </recommendedName>
</protein>